<accession>Q750X7</accession>
<protein>
    <recommendedName>
        <fullName>Acyl-protein thioesterase 1</fullName>
        <ecNumber evidence="2">3.1.2.-</ecNumber>
    </recommendedName>
    <alternativeName>
        <fullName>Palmitoyl-protein hydrolase</fullName>
        <ecNumber evidence="2">3.1.2.22</ecNumber>
    </alternativeName>
</protein>
<proteinExistence type="inferred from homology"/>
<comment type="function">
    <text evidence="2">Hydrolyzes fatty acids from S-acylated cysteine residues in proteins with a strong preference for palmitoylated G-alpha proteins over other acyl substrates. Mediates the deacylation of G-alpha proteins such as GPA1 in vivo, but has weak or no activity toward palmitoylated Ras proteins. Has weak lysophospholipase activity in vitro; however such activity may not exist in vivo.</text>
</comment>
<comment type="catalytic activity">
    <reaction evidence="2">
        <text>S-hexadecanoyl-L-cysteinyl-[protein] + H2O = L-cysteinyl-[protein] + hexadecanoate + H(+)</text>
        <dbReference type="Rhea" id="RHEA:19233"/>
        <dbReference type="Rhea" id="RHEA-COMP:10131"/>
        <dbReference type="Rhea" id="RHEA-COMP:11032"/>
        <dbReference type="ChEBI" id="CHEBI:7896"/>
        <dbReference type="ChEBI" id="CHEBI:15377"/>
        <dbReference type="ChEBI" id="CHEBI:15378"/>
        <dbReference type="ChEBI" id="CHEBI:29950"/>
        <dbReference type="ChEBI" id="CHEBI:74151"/>
        <dbReference type="EC" id="3.1.2.22"/>
    </reaction>
</comment>
<comment type="subcellular location">
    <subcellularLocation>
        <location evidence="2">Cytoplasm</location>
    </subcellularLocation>
    <subcellularLocation>
        <location evidence="2">Nucleus</location>
    </subcellularLocation>
</comment>
<comment type="similarity">
    <text evidence="3">Belongs to the AB hydrolase superfamily. AB hydrolase 2 family.</text>
</comment>
<organism>
    <name type="scientific">Eremothecium gossypii (strain ATCC 10895 / CBS 109.51 / FGSC 9923 / NRRL Y-1056)</name>
    <name type="common">Yeast</name>
    <name type="synonym">Ashbya gossypii</name>
    <dbReference type="NCBI Taxonomy" id="284811"/>
    <lineage>
        <taxon>Eukaryota</taxon>
        <taxon>Fungi</taxon>
        <taxon>Dikarya</taxon>
        <taxon>Ascomycota</taxon>
        <taxon>Saccharomycotina</taxon>
        <taxon>Saccharomycetes</taxon>
        <taxon>Saccharomycetales</taxon>
        <taxon>Saccharomycetaceae</taxon>
        <taxon>Eremothecium</taxon>
    </lineage>
</organism>
<feature type="chain" id="PRO_0000229003" description="Acyl-protein thioesterase 1">
    <location>
        <begin position="1"/>
        <end position="235"/>
    </location>
</feature>
<feature type="active site" description="Charge relay system" evidence="1">
    <location>
        <position position="119"/>
    </location>
</feature>
<feature type="active site" description="Charge relay system" evidence="1">
    <location>
        <position position="172"/>
    </location>
</feature>
<feature type="active site" description="Charge relay system" evidence="1">
    <location>
        <position position="206"/>
    </location>
</feature>
<reference key="1">
    <citation type="journal article" date="2004" name="Science">
        <title>The Ashbya gossypii genome as a tool for mapping the ancient Saccharomyces cerevisiae genome.</title>
        <authorList>
            <person name="Dietrich F.S."/>
            <person name="Voegeli S."/>
            <person name="Brachat S."/>
            <person name="Lerch A."/>
            <person name="Gates K."/>
            <person name="Steiner S."/>
            <person name="Mohr C."/>
            <person name="Poehlmann R."/>
            <person name="Luedi P."/>
            <person name="Choi S."/>
            <person name="Wing R.A."/>
            <person name="Flavier A."/>
            <person name="Gaffney T.D."/>
            <person name="Philippsen P."/>
        </authorList>
    </citation>
    <scope>NUCLEOTIDE SEQUENCE [LARGE SCALE GENOMIC DNA]</scope>
    <source>
        <strain>ATCC 10895 / CBS 109.51 / FGSC 9923 / NRRL Y-1056</strain>
    </source>
</reference>
<reference key="2">
    <citation type="journal article" date="2013" name="G3 (Bethesda)">
        <title>Genomes of Ashbya fungi isolated from insects reveal four mating-type loci, numerous translocations, lack of transposons, and distinct gene duplications.</title>
        <authorList>
            <person name="Dietrich F.S."/>
            <person name="Voegeli S."/>
            <person name="Kuo S."/>
            <person name="Philippsen P."/>
        </authorList>
    </citation>
    <scope>GENOME REANNOTATION</scope>
    <source>
        <strain>ATCC 10895 / CBS 109.51 / FGSC 9923 / NRRL Y-1056</strain>
    </source>
</reference>
<gene>
    <name type="ordered locus">AGL188W</name>
</gene>
<evidence type="ECO:0000250" key="1"/>
<evidence type="ECO:0000250" key="2">
    <source>
        <dbReference type="UniProtKB" id="Q12354"/>
    </source>
</evidence>
<evidence type="ECO:0000305" key="3"/>
<keyword id="KW-0963">Cytoplasm</keyword>
<keyword id="KW-0276">Fatty acid metabolism</keyword>
<keyword id="KW-0378">Hydrolase</keyword>
<keyword id="KW-0443">Lipid metabolism</keyword>
<keyword id="KW-0539">Nucleus</keyword>
<keyword id="KW-1185">Reference proteome</keyword>
<keyword id="KW-0719">Serine esterase</keyword>
<name>APTH1_EREGS</name>
<dbReference type="EC" id="3.1.2.-" evidence="2"/>
<dbReference type="EC" id="3.1.2.22" evidence="2"/>
<dbReference type="EMBL" id="AE016820">
    <property type="protein sequence ID" value="AAS54303.1"/>
    <property type="molecule type" value="Genomic_DNA"/>
</dbReference>
<dbReference type="RefSeq" id="NP_986479.1">
    <property type="nucleotide sequence ID" value="NM_211541.1"/>
</dbReference>
<dbReference type="SMR" id="Q750X7"/>
<dbReference type="FunCoup" id="Q750X7">
    <property type="interactions" value="494"/>
</dbReference>
<dbReference type="STRING" id="284811.Q750X7"/>
<dbReference type="ESTHER" id="ashgo-apth1">
    <property type="family name" value="LYsophospholipase_carboxylesterase"/>
</dbReference>
<dbReference type="EnsemblFungi" id="AAS54303">
    <property type="protein sequence ID" value="AAS54303"/>
    <property type="gene ID" value="AGOS_AGL188W"/>
</dbReference>
<dbReference type="GeneID" id="4622772"/>
<dbReference type="KEGG" id="ago:AGOS_AGL188W"/>
<dbReference type="eggNOG" id="KOG2112">
    <property type="taxonomic scope" value="Eukaryota"/>
</dbReference>
<dbReference type="HOGENOM" id="CLU_049413_3_5_1"/>
<dbReference type="InParanoid" id="Q750X7"/>
<dbReference type="OMA" id="LMFRTYN"/>
<dbReference type="OrthoDB" id="2418081at2759"/>
<dbReference type="Proteomes" id="UP000000591">
    <property type="component" value="Chromosome VII"/>
</dbReference>
<dbReference type="GO" id="GO:0005737">
    <property type="term" value="C:cytoplasm"/>
    <property type="evidence" value="ECO:0000318"/>
    <property type="project" value="GO_Central"/>
</dbReference>
<dbReference type="GO" id="GO:0005634">
    <property type="term" value="C:nucleus"/>
    <property type="evidence" value="ECO:0007669"/>
    <property type="project" value="UniProtKB-SubCell"/>
</dbReference>
<dbReference type="GO" id="GO:0052689">
    <property type="term" value="F:carboxylic ester hydrolase activity"/>
    <property type="evidence" value="ECO:0000318"/>
    <property type="project" value="GO_Central"/>
</dbReference>
<dbReference type="GO" id="GO:0008474">
    <property type="term" value="F:palmitoyl-(protein) hydrolase activity"/>
    <property type="evidence" value="ECO:0000318"/>
    <property type="project" value="GO_Central"/>
</dbReference>
<dbReference type="GO" id="GO:0006631">
    <property type="term" value="P:fatty acid metabolic process"/>
    <property type="evidence" value="ECO:0007669"/>
    <property type="project" value="UniProtKB-KW"/>
</dbReference>
<dbReference type="Gene3D" id="3.40.50.1820">
    <property type="entry name" value="alpha/beta hydrolase"/>
    <property type="match status" value="1"/>
</dbReference>
<dbReference type="InterPro" id="IPR029058">
    <property type="entry name" value="AB_hydrolase_fold"/>
</dbReference>
<dbReference type="InterPro" id="IPR050565">
    <property type="entry name" value="LYPA1-2/EST-like"/>
</dbReference>
<dbReference type="InterPro" id="IPR003140">
    <property type="entry name" value="PLipase/COase/thioEstase"/>
</dbReference>
<dbReference type="PANTHER" id="PTHR10655:SF17">
    <property type="entry name" value="LYSOPHOSPHOLIPASE-LIKE PROTEIN 1"/>
    <property type="match status" value="1"/>
</dbReference>
<dbReference type="PANTHER" id="PTHR10655">
    <property type="entry name" value="LYSOPHOSPHOLIPASE-RELATED"/>
    <property type="match status" value="1"/>
</dbReference>
<dbReference type="Pfam" id="PF02230">
    <property type="entry name" value="Abhydrolase_2"/>
    <property type="match status" value="1"/>
</dbReference>
<dbReference type="SUPFAM" id="SSF53474">
    <property type="entry name" value="alpha/beta-Hydrolases"/>
    <property type="match status" value="1"/>
</dbReference>
<sequence length="235" mass="25544">MSATAPIRIAARAQPAKYAFIIFHGLGDSGAGWTFLAEYLQRDPALASAQFVFPTAPVRPITANNFAPATAWLDVRSWLSHESVDLEGFNESMKLVPKLIEEQVAQGIPYERIWIGGFSQGAALTMGTALSFPHRLGGFLSFSGPPSYRWLEHTVSDANTGAPVFQSHGTMDEVFPSSGAEAVHRSFTSQYGFKNHRLKIYDGLGHSISPQLLDDALAFIKANLDAEKPAPRPAL</sequence>